<sequence length="467" mass="53705">MKVLFAITEAEPFVKTGGLGEVGRYLPLALQEQGVEIRVILPQYSSIPRNYLQKMKTIKEFTVPLAWRNQYCGLKELKYEGIHYYFLDNEYYFRRSRCYGDGDEGEQYAYFSRAVLESVRYLPEFKPDIIHCHDWHTALVPLFLKAFYAQDTLYYNIKTLFTIHNLKYQGIFPREVREDVLGLSGELSSSAQLEFYGGVNFMKAGIMHSDQVTTVSPTYAREIQHPYFGEGLHGVIQGRKDSLLGILNGVPRPWPSPTLADKRANRMKLQEQLNFTNNEEIPILSMISRLVEQKGLDLLLHVLDEILALDIRLVVLGTGDAHYEERLQRFAEGYPGKLRVILGYQEELAHRIYAGADIFLMPSRFEPCGIAQMIAMSYGTIPIVRETGGLKDTVRPYSPISGEGNGFTFTDYNAHELLYAIQKAVEMFRNQKDTWQKLQENALSSDFSWNRSAARYRDVYESLYYSS</sequence>
<gene>
    <name evidence="1" type="primary">glgA</name>
    <name type="ordered locus">Dhaf_3196</name>
</gene>
<proteinExistence type="inferred from homology"/>
<evidence type="ECO:0000255" key="1">
    <source>
        <dbReference type="HAMAP-Rule" id="MF_00484"/>
    </source>
</evidence>
<keyword id="KW-0320">Glycogen biosynthesis</keyword>
<keyword id="KW-0328">Glycosyltransferase</keyword>
<keyword id="KW-0808">Transferase</keyword>
<protein>
    <recommendedName>
        <fullName evidence="1">Glycogen synthase</fullName>
        <ecNumber evidence="1">2.4.1.21</ecNumber>
    </recommendedName>
    <alternativeName>
        <fullName evidence="1">Starch [bacterial glycogen] synthase</fullName>
    </alternativeName>
</protein>
<comment type="function">
    <text evidence="1">Synthesizes alpha-1,4-glucan chains using ADP-glucose.</text>
</comment>
<comment type="catalytic activity">
    <reaction evidence="1">
        <text>[(1-&gt;4)-alpha-D-glucosyl](n) + ADP-alpha-D-glucose = [(1-&gt;4)-alpha-D-glucosyl](n+1) + ADP + H(+)</text>
        <dbReference type="Rhea" id="RHEA:18189"/>
        <dbReference type="Rhea" id="RHEA-COMP:9584"/>
        <dbReference type="Rhea" id="RHEA-COMP:9587"/>
        <dbReference type="ChEBI" id="CHEBI:15378"/>
        <dbReference type="ChEBI" id="CHEBI:15444"/>
        <dbReference type="ChEBI" id="CHEBI:57498"/>
        <dbReference type="ChEBI" id="CHEBI:456216"/>
        <dbReference type="EC" id="2.4.1.21"/>
    </reaction>
</comment>
<comment type="pathway">
    <text evidence="1">Glycan biosynthesis; glycogen biosynthesis.</text>
</comment>
<comment type="similarity">
    <text evidence="1">Belongs to the glycosyltransferase 1 family. Bacterial/plant glycogen synthase subfamily.</text>
</comment>
<reference key="1">
    <citation type="journal article" date="2012" name="BMC Microbiol.">
        <title>Genome sequence of Desulfitobacterium hafniense DCB-2, a Gram-positive anaerobe capable of dehalogenation and metal reduction.</title>
        <authorList>
            <person name="Kim S.H."/>
            <person name="Harzman C."/>
            <person name="Davis J.K."/>
            <person name="Hutcheson R."/>
            <person name="Broderick J.B."/>
            <person name="Marsh T.L."/>
            <person name="Tiedje J.M."/>
        </authorList>
    </citation>
    <scope>NUCLEOTIDE SEQUENCE [LARGE SCALE GENOMIC DNA]</scope>
    <source>
        <strain>DSM 10664 / DCB-2</strain>
    </source>
</reference>
<dbReference type="EC" id="2.4.1.21" evidence="1"/>
<dbReference type="EMBL" id="CP001336">
    <property type="protein sequence ID" value="ACL21216.1"/>
    <property type="molecule type" value="Genomic_DNA"/>
</dbReference>
<dbReference type="SMR" id="B8G1G3"/>
<dbReference type="CAZy" id="GT5">
    <property type="family name" value="Glycosyltransferase Family 5"/>
</dbReference>
<dbReference type="KEGG" id="dhd:Dhaf_3196"/>
<dbReference type="HOGENOM" id="CLU_009583_18_2_9"/>
<dbReference type="UniPathway" id="UPA00164"/>
<dbReference type="Proteomes" id="UP000007726">
    <property type="component" value="Chromosome"/>
</dbReference>
<dbReference type="GO" id="GO:0009011">
    <property type="term" value="F:alpha-1,4-glucan glucosyltransferase (ADP-glucose donor) activity"/>
    <property type="evidence" value="ECO:0007669"/>
    <property type="project" value="UniProtKB-UniRule"/>
</dbReference>
<dbReference type="GO" id="GO:0004373">
    <property type="term" value="F:alpha-1,4-glucan glucosyltransferase (UDP-glucose donor) activity"/>
    <property type="evidence" value="ECO:0007669"/>
    <property type="project" value="InterPro"/>
</dbReference>
<dbReference type="GO" id="GO:0005978">
    <property type="term" value="P:glycogen biosynthetic process"/>
    <property type="evidence" value="ECO:0007669"/>
    <property type="project" value="UniProtKB-UniRule"/>
</dbReference>
<dbReference type="CDD" id="cd03791">
    <property type="entry name" value="GT5_Glycogen_synthase_DULL1-like"/>
    <property type="match status" value="1"/>
</dbReference>
<dbReference type="Gene3D" id="3.40.50.2000">
    <property type="entry name" value="Glycogen Phosphorylase B"/>
    <property type="match status" value="2"/>
</dbReference>
<dbReference type="HAMAP" id="MF_00484">
    <property type="entry name" value="Glycogen_synth"/>
    <property type="match status" value="1"/>
</dbReference>
<dbReference type="InterPro" id="IPR001296">
    <property type="entry name" value="Glyco_trans_1"/>
</dbReference>
<dbReference type="InterPro" id="IPR011835">
    <property type="entry name" value="GS/SS"/>
</dbReference>
<dbReference type="InterPro" id="IPR013534">
    <property type="entry name" value="Starch_synth_cat_dom"/>
</dbReference>
<dbReference type="NCBIfam" id="TIGR02095">
    <property type="entry name" value="glgA"/>
    <property type="match status" value="1"/>
</dbReference>
<dbReference type="NCBIfam" id="NF001898">
    <property type="entry name" value="PRK00654.1-1"/>
    <property type="match status" value="1"/>
</dbReference>
<dbReference type="PANTHER" id="PTHR45825:SF11">
    <property type="entry name" value="ALPHA AMYLASE DOMAIN-CONTAINING PROTEIN"/>
    <property type="match status" value="1"/>
</dbReference>
<dbReference type="PANTHER" id="PTHR45825">
    <property type="entry name" value="GRANULE-BOUND STARCH SYNTHASE 1, CHLOROPLASTIC/AMYLOPLASTIC"/>
    <property type="match status" value="1"/>
</dbReference>
<dbReference type="Pfam" id="PF08323">
    <property type="entry name" value="Glyco_transf_5"/>
    <property type="match status" value="1"/>
</dbReference>
<dbReference type="Pfam" id="PF00534">
    <property type="entry name" value="Glycos_transf_1"/>
    <property type="match status" value="1"/>
</dbReference>
<dbReference type="SUPFAM" id="SSF53756">
    <property type="entry name" value="UDP-Glycosyltransferase/glycogen phosphorylase"/>
    <property type="match status" value="1"/>
</dbReference>
<accession>B8G1G3</accession>
<feature type="chain" id="PRO_1000135647" description="Glycogen synthase">
    <location>
        <begin position="1"/>
        <end position="467"/>
    </location>
</feature>
<feature type="binding site" evidence="1">
    <location>
        <position position="15"/>
    </location>
    <ligand>
        <name>ADP-alpha-D-glucose</name>
        <dbReference type="ChEBI" id="CHEBI:57498"/>
    </ligand>
</feature>
<organism>
    <name type="scientific">Desulfitobacterium hafniense (strain DSM 10664 / DCB-2)</name>
    <dbReference type="NCBI Taxonomy" id="272564"/>
    <lineage>
        <taxon>Bacteria</taxon>
        <taxon>Bacillati</taxon>
        <taxon>Bacillota</taxon>
        <taxon>Clostridia</taxon>
        <taxon>Eubacteriales</taxon>
        <taxon>Desulfitobacteriaceae</taxon>
        <taxon>Desulfitobacterium</taxon>
    </lineage>
</organism>
<name>GLGA_DESHD</name>